<gene>
    <name type="primary">tvp38</name>
    <name type="ORF">SPBC1711.09c</name>
</gene>
<reference key="1">
    <citation type="journal article" date="2002" name="Nature">
        <title>The genome sequence of Schizosaccharomyces pombe.</title>
        <authorList>
            <person name="Wood V."/>
            <person name="Gwilliam R."/>
            <person name="Rajandream M.A."/>
            <person name="Lyne M.H."/>
            <person name="Lyne R."/>
            <person name="Stewart A."/>
            <person name="Sgouros J.G."/>
            <person name="Peat N."/>
            <person name="Hayles J."/>
            <person name="Baker S.G."/>
            <person name="Basham D."/>
            <person name="Bowman S."/>
            <person name="Brooks K."/>
            <person name="Brown D."/>
            <person name="Brown S."/>
            <person name="Chillingworth T."/>
            <person name="Churcher C.M."/>
            <person name="Collins M."/>
            <person name="Connor R."/>
            <person name="Cronin A."/>
            <person name="Davis P."/>
            <person name="Feltwell T."/>
            <person name="Fraser A."/>
            <person name="Gentles S."/>
            <person name="Goble A."/>
            <person name="Hamlin N."/>
            <person name="Harris D.E."/>
            <person name="Hidalgo J."/>
            <person name="Hodgson G."/>
            <person name="Holroyd S."/>
            <person name="Hornsby T."/>
            <person name="Howarth S."/>
            <person name="Huckle E.J."/>
            <person name="Hunt S."/>
            <person name="Jagels K."/>
            <person name="James K.D."/>
            <person name="Jones L."/>
            <person name="Jones M."/>
            <person name="Leather S."/>
            <person name="McDonald S."/>
            <person name="McLean J."/>
            <person name="Mooney P."/>
            <person name="Moule S."/>
            <person name="Mungall K.L."/>
            <person name="Murphy L.D."/>
            <person name="Niblett D."/>
            <person name="Odell C."/>
            <person name="Oliver K."/>
            <person name="O'Neil S."/>
            <person name="Pearson D."/>
            <person name="Quail M.A."/>
            <person name="Rabbinowitsch E."/>
            <person name="Rutherford K.M."/>
            <person name="Rutter S."/>
            <person name="Saunders D."/>
            <person name="Seeger K."/>
            <person name="Sharp S."/>
            <person name="Skelton J."/>
            <person name="Simmonds M.N."/>
            <person name="Squares R."/>
            <person name="Squares S."/>
            <person name="Stevens K."/>
            <person name="Taylor K."/>
            <person name="Taylor R.G."/>
            <person name="Tivey A."/>
            <person name="Walsh S.V."/>
            <person name="Warren T."/>
            <person name="Whitehead S."/>
            <person name="Woodward J.R."/>
            <person name="Volckaert G."/>
            <person name="Aert R."/>
            <person name="Robben J."/>
            <person name="Grymonprez B."/>
            <person name="Weltjens I."/>
            <person name="Vanstreels E."/>
            <person name="Rieger M."/>
            <person name="Schaefer M."/>
            <person name="Mueller-Auer S."/>
            <person name="Gabel C."/>
            <person name="Fuchs M."/>
            <person name="Duesterhoeft A."/>
            <person name="Fritzc C."/>
            <person name="Holzer E."/>
            <person name="Moestl D."/>
            <person name="Hilbert H."/>
            <person name="Borzym K."/>
            <person name="Langer I."/>
            <person name="Beck A."/>
            <person name="Lehrach H."/>
            <person name="Reinhardt R."/>
            <person name="Pohl T.M."/>
            <person name="Eger P."/>
            <person name="Zimmermann W."/>
            <person name="Wedler H."/>
            <person name="Wambutt R."/>
            <person name="Purnelle B."/>
            <person name="Goffeau A."/>
            <person name="Cadieu E."/>
            <person name="Dreano S."/>
            <person name="Gloux S."/>
            <person name="Lelaure V."/>
            <person name="Mottier S."/>
            <person name="Galibert F."/>
            <person name="Aves S.J."/>
            <person name="Xiang Z."/>
            <person name="Hunt C."/>
            <person name="Moore K."/>
            <person name="Hurst S.M."/>
            <person name="Lucas M."/>
            <person name="Rochet M."/>
            <person name="Gaillardin C."/>
            <person name="Tallada V.A."/>
            <person name="Garzon A."/>
            <person name="Thode G."/>
            <person name="Daga R.R."/>
            <person name="Cruzado L."/>
            <person name="Jimenez J."/>
            <person name="Sanchez M."/>
            <person name="del Rey F."/>
            <person name="Benito J."/>
            <person name="Dominguez A."/>
            <person name="Revuelta J.L."/>
            <person name="Moreno S."/>
            <person name="Armstrong J."/>
            <person name="Forsburg S.L."/>
            <person name="Cerutti L."/>
            <person name="Lowe T."/>
            <person name="McCombie W.R."/>
            <person name="Paulsen I."/>
            <person name="Potashkin J."/>
            <person name="Shpakovski G.V."/>
            <person name="Ussery D."/>
            <person name="Barrell B.G."/>
            <person name="Nurse P."/>
        </authorList>
    </citation>
    <scope>NUCLEOTIDE SEQUENCE [LARGE SCALE GENOMIC DNA]</scope>
    <source>
        <strain>972 / ATCC 24843</strain>
    </source>
</reference>
<reference key="2">
    <citation type="journal article" date="2011" name="Science">
        <title>Comparative functional genomics of the fission yeasts.</title>
        <authorList>
            <person name="Rhind N."/>
            <person name="Chen Z."/>
            <person name="Yassour M."/>
            <person name="Thompson D.A."/>
            <person name="Haas B.J."/>
            <person name="Habib N."/>
            <person name="Wapinski I."/>
            <person name="Roy S."/>
            <person name="Lin M.F."/>
            <person name="Heiman D.I."/>
            <person name="Young S.K."/>
            <person name="Furuya K."/>
            <person name="Guo Y."/>
            <person name="Pidoux A."/>
            <person name="Chen H.M."/>
            <person name="Robbertse B."/>
            <person name="Goldberg J.M."/>
            <person name="Aoki K."/>
            <person name="Bayne E.H."/>
            <person name="Berlin A.M."/>
            <person name="Desjardins C.A."/>
            <person name="Dobbs E."/>
            <person name="Dukaj L."/>
            <person name="Fan L."/>
            <person name="FitzGerald M.G."/>
            <person name="French C."/>
            <person name="Gujja S."/>
            <person name="Hansen K."/>
            <person name="Keifenheim D."/>
            <person name="Levin J.Z."/>
            <person name="Mosher R.A."/>
            <person name="Mueller C.A."/>
            <person name="Pfiffner J."/>
            <person name="Priest M."/>
            <person name="Russ C."/>
            <person name="Smialowska A."/>
            <person name="Swoboda P."/>
            <person name="Sykes S.M."/>
            <person name="Vaughn M."/>
            <person name="Vengrova S."/>
            <person name="Yoder R."/>
            <person name="Zeng Q."/>
            <person name="Allshire R."/>
            <person name="Baulcombe D."/>
            <person name="Birren B.W."/>
            <person name="Brown W."/>
            <person name="Ekwall K."/>
            <person name="Kellis M."/>
            <person name="Leatherwood J."/>
            <person name="Levin H."/>
            <person name="Margalit H."/>
            <person name="Martienssen R."/>
            <person name="Nieduszynski C.A."/>
            <person name="Spatafora J.W."/>
            <person name="Friedman N."/>
            <person name="Dalgaard J.Z."/>
            <person name="Baumann P."/>
            <person name="Niki H."/>
            <person name="Regev A."/>
            <person name="Nusbaum C."/>
        </authorList>
    </citation>
    <scope>REVISION OF GENE MODEL</scope>
</reference>
<protein>
    <recommendedName>
        <fullName>Golgi apparatus membrane protein tvp38</fullName>
    </recommendedName>
</protein>
<proteinExistence type="inferred from homology"/>
<feature type="chain" id="PRO_0000343074" description="Golgi apparatus membrane protein tvp38">
    <location>
        <begin position="1"/>
        <end position="276"/>
    </location>
</feature>
<feature type="topological domain" description="Lumenal" evidence="3">
    <location>
        <begin position="1"/>
        <end position="9"/>
    </location>
</feature>
<feature type="transmembrane region" description="Helical" evidence="3">
    <location>
        <begin position="10"/>
        <end position="30"/>
    </location>
</feature>
<feature type="topological domain" description="Cytoplasmic" evidence="3">
    <location>
        <begin position="31"/>
        <end position="47"/>
    </location>
</feature>
<feature type="transmembrane region" description="Helical" evidence="3">
    <location>
        <begin position="48"/>
        <end position="68"/>
    </location>
</feature>
<feature type="topological domain" description="Lumenal" evidence="3">
    <location>
        <begin position="69"/>
        <end position="75"/>
    </location>
</feature>
<feature type="transmembrane region" description="Helical" evidence="3">
    <location>
        <begin position="76"/>
        <end position="96"/>
    </location>
</feature>
<feature type="topological domain" description="Cytoplasmic" evidence="3">
    <location>
        <begin position="97"/>
        <end position="152"/>
    </location>
</feature>
<feature type="transmembrane region" description="Helical" evidence="3">
    <location>
        <begin position="153"/>
        <end position="173"/>
    </location>
</feature>
<feature type="topological domain" description="Lumenal" evidence="3">
    <location>
        <begin position="174"/>
        <end position="196"/>
    </location>
</feature>
<feature type="transmembrane region" description="Helical" evidence="3">
    <location>
        <begin position="197"/>
        <end position="217"/>
    </location>
</feature>
<feature type="topological domain" description="Cytoplasmic" evidence="3">
    <location>
        <begin position="218"/>
        <end position="276"/>
    </location>
</feature>
<feature type="region of interest" description="VTT domain" evidence="2">
    <location>
        <begin position="78"/>
        <end position="188"/>
    </location>
</feature>
<feature type="region of interest" description="Disordered" evidence="4">
    <location>
        <begin position="257"/>
        <end position="276"/>
    </location>
</feature>
<feature type="glycosylation site" description="N-linked (GlcNAc...) asparagine" evidence="3">
    <location>
        <position position="191"/>
    </location>
</feature>
<organism>
    <name type="scientific">Schizosaccharomyces pombe (strain 972 / ATCC 24843)</name>
    <name type="common">Fission yeast</name>
    <dbReference type="NCBI Taxonomy" id="284812"/>
    <lineage>
        <taxon>Eukaryota</taxon>
        <taxon>Fungi</taxon>
        <taxon>Dikarya</taxon>
        <taxon>Ascomycota</taxon>
        <taxon>Taphrinomycotina</taxon>
        <taxon>Schizosaccharomycetes</taxon>
        <taxon>Schizosaccharomycetales</taxon>
        <taxon>Schizosaccharomycetaceae</taxon>
        <taxon>Schizosaccharomyces</taxon>
    </lineage>
</organism>
<sequence>MPAPVSSIKIIALAAIGILIVVFAILLAVFHNDLLAIAMPIAERIAKLPMSFLIALVLIAASSIPPLLGQDPLALLIGAVWGLNVGFWTVVCGIFIGETIAFMAYRYFLEQKAQEFREHHEEHYGTFVKIVEEGSYPLIWLIRLSFLPTHFTTVFFATLPELSYIGWAIAFWLSCFKYLVPVYAGYCIVHNKSSAANIVGIVLSIVVTLGTLAFLIVRYKAIKNSTLEDSTNSTSDVLNHLESQPTDSIDLRHLEQTSEQNETDNSERKHLLSHQH</sequence>
<name>TVP38_SCHPO</name>
<comment type="function">
    <text evidence="1">Golgi membrane protein involved in vesicular trafficking and spindle migration.</text>
</comment>
<comment type="subcellular location">
    <subcellularLocation>
        <location evidence="1">Golgi apparatus membrane</location>
        <topology evidence="1">Multi-pass membrane protein</topology>
    </subcellularLocation>
</comment>
<comment type="domain">
    <text evidence="2">The VTT domain was previously called the SNARE-assoc domain. As there is no evidence that this domain associates with SNARE proteins, it was renamed as VMP1, TMEM41, and TVP38 (VTT) domain.</text>
</comment>
<comment type="similarity">
    <text evidence="5">Belongs to the TVP38/TMEM64 family.</text>
</comment>
<keyword id="KW-0325">Glycoprotein</keyword>
<keyword id="KW-0333">Golgi apparatus</keyword>
<keyword id="KW-0472">Membrane</keyword>
<keyword id="KW-1185">Reference proteome</keyword>
<keyword id="KW-0812">Transmembrane</keyword>
<keyword id="KW-1133">Transmembrane helix</keyword>
<evidence type="ECO:0000250" key="1"/>
<evidence type="ECO:0000250" key="2">
    <source>
        <dbReference type="UniProtKB" id="P36164"/>
    </source>
</evidence>
<evidence type="ECO:0000255" key="3"/>
<evidence type="ECO:0000256" key="4">
    <source>
        <dbReference type="SAM" id="MobiDB-lite"/>
    </source>
</evidence>
<evidence type="ECO:0000305" key="5"/>
<dbReference type="EMBL" id="CU329671">
    <property type="protein sequence ID" value="CAB88239.2"/>
    <property type="molecule type" value="Genomic_DNA"/>
</dbReference>
<dbReference type="RefSeq" id="NP_595882.2">
    <property type="nucleotide sequence ID" value="NM_001021788.2"/>
</dbReference>
<dbReference type="SMR" id="Q9P781"/>
<dbReference type="FunCoup" id="Q9P781">
    <property type="interactions" value="31"/>
</dbReference>
<dbReference type="STRING" id="284812.Q9P781"/>
<dbReference type="GlyCosmos" id="Q9P781">
    <property type="glycosylation" value="1 site, No reported glycans"/>
</dbReference>
<dbReference type="iPTMnet" id="Q9P781"/>
<dbReference type="PaxDb" id="4896-SPBC1711.09c.1"/>
<dbReference type="EnsemblFungi" id="SPBC1711.09c.1">
    <property type="protein sequence ID" value="SPBC1711.09c.1:pep"/>
    <property type="gene ID" value="SPBC1711.09c"/>
</dbReference>
<dbReference type="KEGG" id="spo:2539871"/>
<dbReference type="PomBase" id="SPBC1711.09c"/>
<dbReference type="VEuPathDB" id="FungiDB:SPBC1711.09c"/>
<dbReference type="eggNOG" id="KOG3140">
    <property type="taxonomic scope" value="Eukaryota"/>
</dbReference>
<dbReference type="HOGENOM" id="CLU_021545_0_1_1"/>
<dbReference type="InParanoid" id="Q9P781"/>
<dbReference type="OMA" id="FWHFVVA"/>
<dbReference type="PRO" id="PR:Q9P781"/>
<dbReference type="Proteomes" id="UP000002485">
    <property type="component" value="Chromosome II"/>
</dbReference>
<dbReference type="GO" id="GO:0005737">
    <property type="term" value="C:cytoplasm"/>
    <property type="evidence" value="ECO:0007005"/>
    <property type="project" value="PomBase"/>
</dbReference>
<dbReference type="GO" id="GO:0000139">
    <property type="term" value="C:Golgi membrane"/>
    <property type="evidence" value="ECO:0000266"/>
    <property type="project" value="PomBase"/>
</dbReference>
<dbReference type="GO" id="GO:0016192">
    <property type="term" value="P:vesicle-mediated transport"/>
    <property type="evidence" value="ECO:0000266"/>
    <property type="project" value="PomBase"/>
</dbReference>
<dbReference type="InterPro" id="IPR051076">
    <property type="entry name" value="Golgi_membrane_TVP38/TMEM64"/>
</dbReference>
<dbReference type="InterPro" id="IPR032816">
    <property type="entry name" value="VTT_dom"/>
</dbReference>
<dbReference type="PANTHER" id="PTHR47549:SF2">
    <property type="entry name" value="GOLGI APPARATUS MEMBRANE PROTEIN TVP38"/>
    <property type="match status" value="1"/>
</dbReference>
<dbReference type="PANTHER" id="PTHR47549">
    <property type="entry name" value="GOLGI APPARATUS MEMBRANE PROTEIN TVP38-RELATED"/>
    <property type="match status" value="1"/>
</dbReference>
<dbReference type="Pfam" id="PF09335">
    <property type="entry name" value="VTT_dom"/>
    <property type="match status" value="1"/>
</dbReference>
<accession>Q9P781</accession>